<accession>Q32LQ3</accession>
<accession>Q8JFR7</accession>
<accession>Q8JFW3</accession>
<keyword id="KW-0012">Acyltransferase</keyword>
<keyword id="KW-0479">Metal-binding</keyword>
<keyword id="KW-0496">Mitochondrion</keyword>
<keyword id="KW-1185">Reference proteome</keyword>
<keyword id="KW-0808">Transferase</keyword>
<keyword id="KW-0809">Transit peptide</keyword>
<keyword id="KW-0819">tRNA processing</keyword>
<evidence type="ECO:0000255" key="1">
    <source>
        <dbReference type="HAMAP-Rule" id="MF_03179"/>
    </source>
</evidence>
<evidence type="ECO:0000305" key="2"/>
<protein>
    <recommendedName>
        <fullName evidence="1">tRNA N6-adenosine threonylcarbamoyltransferase, mitochondrial</fullName>
        <ecNumber evidence="1">2.3.1.234</ecNumber>
    </recommendedName>
    <alternativeName>
        <fullName evidence="1">N6-L-threonylcarbamoyladenine synthase</fullName>
        <shortName evidence="1">t(6)A synthase</shortName>
    </alternativeName>
    <alternativeName>
        <fullName evidence="1">O-sialoglycoprotein endopeptidase-like protein 1</fullName>
    </alternativeName>
    <alternativeName>
        <fullName evidence="1">t(6)A37 threonylcarbamoyladenosine biosynthesis protein osgepl1</fullName>
    </alternativeName>
    <alternativeName>
        <fullName evidence="1">tRNA threonylcarbamoyladenosine biosynthesis protein osgepl1</fullName>
    </alternativeName>
</protein>
<reference key="1">
    <citation type="journal article" date="2013" name="Nature">
        <title>The zebrafish reference genome sequence and its relationship to the human genome.</title>
        <authorList>
            <person name="Howe K."/>
            <person name="Clark M.D."/>
            <person name="Torroja C.F."/>
            <person name="Torrance J."/>
            <person name="Berthelot C."/>
            <person name="Muffato M."/>
            <person name="Collins J.E."/>
            <person name="Humphray S."/>
            <person name="McLaren K."/>
            <person name="Matthews L."/>
            <person name="McLaren S."/>
            <person name="Sealy I."/>
            <person name="Caccamo M."/>
            <person name="Churcher C."/>
            <person name="Scott C."/>
            <person name="Barrett J.C."/>
            <person name="Koch R."/>
            <person name="Rauch G.J."/>
            <person name="White S."/>
            <person name="Chow W."/>
            <person name="Kilian B."/>
            <person name="Quintais L.T."/>
            <person name="Guerra-Assuncao J.A."/>
            <person name="Zhou Y."/>
            <person name="Gu Y."/>
            <person name="Yen J."/>
            <person name="Vogel J.H."/>
            <person name="Eyre T."/>
            <person name="Redmond S."/>
            <person name="Banerjee R."/>
            <person name="Chi J."/>
            <person name="Fu B."/>
            <person name="Langley E."/>
            <person name="Maguire S.F."/>
            <person name="Laird G.K."/>
            <person name="Lloyd D."/>
            <person name="Kenyon E."/>
            <person name="Donaldson S."/>
            <person name="Sehra H."/>
            <person name="Almeida-King J."/>
            <person name="Loveland J."/>
            <person name="Trevanion S."/>
            <person name="Jones M."/>
            <person name="Quail M."/>
            <person name="Willey D."/>
            <person name="Hunt A."/>
            <person name="Burton J."/>
            <person name="Sims S."/>
            <person name="McLay K."/>
            <person name="Plumb B."/>
            <person name="Davis J."/>
            <person name="Clee C."/>
            <person name="Oliver K."/>
            <person name="Clark R."/>
            <person name="Riddle C."/>
            <person name="Elliot D."/>
            <person name="Threadgold G."/>
            <person name="Harden G."/>
            <person name="Ware D."/>
            <person name="Begum S."/>
            <person name="Mortimore B."/>
            <person name="Kerry G."/>
            <person name="Heath P."/>
            <person name="Phillimore B."/>
            <person name="Tracey A."/>
            <person name="Corby N."/>
            <person name="Dunn M."/>
            <person name="Johnson C."/>
            <person name="Wood J."/>
            <person name="Clark S."/>
            <person name="Pelan S."/>
            <person name="Griffiths G."/>
            <person name="Smith M."/>
            <person name="Glithero R."/>
            <person name="Howden P."/>
            <person name="Barker N."/>
            <person name="Lloyd C."/>
            <person name="Stevens C."/>
            <person name="Harley J."/>
            <person name="Holt K."/>
            <person name="Panagiotidis G."/>
            <person name="Lovell J."/>
            <person name="Beasley H."/>
            <person name="Henderson C."/>
            <person name="Gordon D."/>
            <person name="Auger K."/>
            <person name="Wright D."/>
            <person name="Collins J."/>
            <person name="Raisen C."/>
            <person name="Dyer L."/>
            <person name="Leung K."/>
            <person name="Robertson L."/>
            <person name="Ambridge K."/>
            <person name="Leongamornlert D."/>
            <person name="McGuire S."/>
            <person name="Gilderthorp R."/>
            <person name="Griffiths C."/>
            <person name="Manthravadi D."/>
            <person name="Nichol S."/>
            <person name="Barker G."/>
            <person name="Whitehead S."/>
            <person name="Kay M."/>
            <person name="Brown J."/>
            <person name="Murnane C."/>
            <person name="Gray E."/>
            <person name="Humphries M."/>
            <person name="Sycamore N."/>
            <person name="Barker D."/>
            <person name="Saunders D."/>
            <person name="Wallis J."/>
            <person name="Babbage A."/>
            <person name="Hammond S."/>
            <person name="Mashreghi-Mohammadi M."/>
            <person name="Barr L."/>
            <person name="Martin S."/>
            <person name="Wray P."/>
            <person name="Ellington A."/>
            <person name="Matthews N."/>
            <person name="Ellwood M."/>
            <person name="Woodmansey R."/>
            <person name="Clark G."/>
            <person name="Cooper J."/>
            <person name="Tromans A."/>
            <person name="Grafham D."/>
            <person name="Skuce C."/>
            <person name="Pandian R."/>
            <person name="Andrews R."/>
            <person name="Harrison E."/>
            <person name="Kimberley A."/>
            <person name="Garnett J."/>
            <person name="Fosker N."/>
            <person name="Hall R."/>
            <person name="Garner P."/>
            <person name="Kelly D."/>
            <person name="Bird C."/>
            <person name="Palmer S."/>
            <person name="Gehring I."/>
            <person name="Berger A."/>
            <person name="Dooley C.M."/>
            <person name="Ersan-Urun Z."/>
            <person name="Eser C."/>
            <person name="Geiger H."/>
            <person name="Geisler M."/>
            <person name="Karotki L."/>
            <person name="Kirn A."/>
            <person name="Konantz J."/>
            <person name="Konantz M."/>
            <person name="Oberlander M."/>
            <person name="Rudolph-Geiger S."/>
            <person name="Teucke M."/>
            <person name="Lanz C."/>
            <person name="Raddatz G."/>
            <person name="Osoegawa K."/>
            <person name="Zhu B."/>
            <person name="Rapp A."/>
            <person name="Widaa S."/>
            <person name="Langford C."/>
            <person name="Yang F."/>
            <person name="Schuster S.C."/>
            <person name="Carter N.P."/>
            <person name="Harrow J."/>
            <person name="Ning Z."/>
            <person name="Herrero J."/>
            <person name="Searle S.M."/>
            <person name="Enright A."/>
            <person name="Geisler R."/>
            <person name="Plasterk R.H."/>
            <person name="Lee C."/>
            <person name="Westerfield M."/>
            <person name="de Jong P.J."/>
            <person name="Zon L.I."/>
            <person name="Postlethwait J.H."/>
            <person name="Nusslein-Volhard C."/>
            <person name="Hubbard T.J."/>
            <person name="Roest Crollius H."/>
            <person name="Rogers J."/>
            <person name="Stemple D.L."/>
        </authorList>
    </citation>
    <scope>NUCLEOTIDE SEQUENCE [LARGE SCALE GENOMIC DNA]</scope>
    <source>
        <strain>Tuebingen</strain>
    </source>
</reference>
<reference key="2">
    <citation type="submission" date="2005-11" db="EMBL/GenBank/DDBJ databases">
        <authorList>
            <consortium name="NIH - Zebrafish Gene Collection (ZGC) project"/>
        </authorList>
    </citation>
    <scope>NUCLEOTIDE SEQUENCE [LARGE SCALE MRNA]</scope>
</reference>
<dbReference type="EC" id="2.3.1.234" evidence="1"/>
<dbReference type="EMBL" id="AL672217">
    <property type="protein sequence ID" value="CAD43443.1"/>
    <property type="molecule type" value="Genomic_DNA"/>
</dbReference>
<dbReference type="EMBL" id="AL591593">
    <property type="protein sequence ID" value="CAD43471.1"/>
    <property type="molecule type" value="Genomic_DNA"/>
</dbReference>
<dbReference type="EMBL" id="BC109473">
    <property type="protein sequence ID" value="AAI09474.1"/>
    <property type="molecule type" value="mRNA"/>
</dbReference>
<dbReference type="RefSeq" id="NP_001005301.1">
    <property type="nucleotide sequence ID" value="NM_001005301.1"/>
</dbReference>
<dbReference type="SMR" id="Q32LQ3"/>
<dbReference type="FunCoup" id="Q32LQ3">
    <property type="interactions" value="1355"/>
</dbReference>
<dbReference type="STRING" id="7955.ENSDARP00000001156"/>
<dbReference type="PaxDb" id="7955-ENSDARP00000001156"/>
<dbReference type="GeneID" id="368635"/>
<dbReference type="KEGG" id="dre:368635"/>
<dbReference type="AGR" id="ZFIN:ZDB-GENE-030616-532"/>
<dbReference type="CTD" id="64172"/>
<dbReference type="ZFIN" id="ZDB-GENE-030616-532">
    <property type="gene designation" value="osgepl1"/>
</dbReference>
<dbReference type="eggNOG" id="KOG2707">
    <property type="taxonomic scope" value="Eukaryota"/>
</dbReference>
<dbReference type="InParanoid" id="Q32LQ3"/>
<dbReference type="OrthoDB" id="10259622at2759"/>
<dbReference type="PhylomeDB" id="Q32LQ3"/>
<dbReference type="PRO" id="PR:Q32LQ3"/>
<dbReference type="Proteomes" id="UP000000437">
    <property type="component" value="Chromosome 9"/>
</dbReference>
<dbReference type="GO" id="GO:0005739">
    <property type="term" value="C:mitochondrion"/>
    <property type="evidence" value="ECO:0000250"/>
    <property type="project" value="UniProtKB"/>
</dbReference>
<dbReference type="GO" id="GO:0046872">
    <property type="term" value="F:metal ion binding"/>
    <property type="evidence" value="ECO:0007669"/>
    <property type="project" value="UniProtKB-KW"/>
</dbReference>
<dbReference type="GO" id="GO:0061711">
    <property type="term" value="F:N(6)-L-threonylcarbamoyladenine synthase activity"/>
    <property type="evidence" value="ECO:0000250"/>
    <property type="project" value="UniProtKB"/>
</dbReference>
<dbReference type="GO" id="GO:0002949">
    <property type="term" value="P:tRNA threonylcarbamoyladenosine modification"/>
    <property type="evidence" value="ECO:0000250"/>
    <property type="project" value="UniProtKB"/>
</dbReference>
<dbReference type="CDD" id="cd24134">
    <property type="entry name" value="ASKHA_NBD_OSGEPL1_QRI7_euk"/>
    <property type="match status" value="1"/>
</dbReference>
<dbReference type="FunFam" id="3.30.420.40:FF:000106">
    <property type="entry name" value="Probable tRNA N6-adenosine threonylcarbamoyltransferase, mitochondrial"/>
    <property type="match status" value="1"/>
</dbReference>
<dbReference type="Gene3D" id="3.30.420.40">
    <property type="match status" value="2"/>
</dbReference>
<dbReference type="HAMAP" id="MF_01445">
    <property type="entry name" value="TsaD"/>
    <property type="match status" value="1"/>
</dbReference>
<dbReference type="InterPro" id="IPR043129">
    <property type="entry name" value="ATPase_NBD"/>
</dbReference>
<dbReference type="InterPro" id="IPR000905">
    <property type="entry name" value="Gcp-like_dom"/>
</dbReference>
<dbReference type="InterPro" id="IPR017861">
    <property type="entry name" value="KAE1/TsaD"/>
</dbReference>
<dbReference type="InterPro" id="IPR022450">
    <property type="entry name" value="TsaD"/>
</dbReference>
<dbReference type="NCBIfam" id="TIGR00329">
    <property type="entry name" value="gcp_kae1"/>
    <property type="match status" value="1"/>
</dbReference>
<dbReference type="NCBIfam" id="TIGR03723">
    <property type="entry name" value="T6A_TsaD_YgjD"/>
    <property type="match status" value="1"/>
</dbReference>
<dbReference type="PANTHER" id="PTHR11735">
    <property type="entry name" value="TRNA N6-ADENOSINE THREONYLCARBAMOYLTRANSFERASE"/>
    <property type="match status" value="1"/>
</dbReference>
<dbReference type="PANTHER" id="PTHR11735:SF6">
    <property type="entry name" value="TRNA N6-ADENOSINE THREONYLCARBAMOYLTRANSFERASE, MITOCHONDRIAL"/>
    <property type="match status" value="1"/>
</dbReference>
<dbReference type="Pfam" id="PF00814">
    <property type="entry name" value="TsaD"/>
    <property type="match status" value="1"/>
</dbReference>
<dbReference type="PRINTS" id="PR00789">
    <property type="entry name" value="OSIALOPTASE"/>
</dbReference>
<dbReference type="SUPFAM" id="SSF53067">
    <property type="entry name" value="Actin-like ATPase domain"/>
    <property type="match status" value="1"/>
</dbReference>
<gene>
    <name evidence="1" type="primary">osgepl1</name>
    <name type="ORF">si:dz72b14.6</name>
</gene>
<comment type="function">
    <text evidence="1">Required for the formation of a threonylcarbamoyl group on adenosine at position 37 (t(6)A37) in mitochondrial tRNAs that read codons beginning with adenine. Probably involved in the transfer of the threonylcarbamoyl moiety of threonylcarbamoyl-AMP (TC-AMP) to the N6 group of A37. Involved in mitochondrial genome maintenance.</text>
</comment>
<comment type="catalytic activity">
    <reaction evidence="1">
        <text>L-threonylcarbamoyladenylate + adenosine(37) in tRNA = N(6)-L-threonylcarbamoyladenosine(37) in tRNA + AMP + H(+)</text>
        <dbReference type="Rhea" id="RHEA:37059"/>
        <dbReference type="Rhea" id="RHEA-COMP:10162"/>
        <dbReference type="Rhea" id="RHEA-COMP:10163"/>
        <dbReference type="ChEBI" id="CHEBI:15378"/>
        <dbReference type="ChEBI" id="CHEBI:73682"/>
        <dbReference type="ChEBI" id="CHEBI:74411"/>
        <dbReference type="ChEBI" id="CHEBI:74418"/>
        <dbReference type="ChEBI" id="CHEBI:456215"/>
        <dbReference type="EC" id="2.3.1.234"/>
    </reaction>
</comment>
<comment type="cofactor">
    <cofactor evidence="1">
        <name>a divalent metal cation</name>
        <dbReference type="ChEBI" id="CHEBI:60240"/>
    </cofactor>
    <text evidence="1">Binds 1 divalent metal cation per subunit.</text>
</comment>
<comment type="subunit">
    <text evidence="1">Monomer.</text>
</comment>
<comment type="subcellular location">
    <subcellularLocation>
        <location evidence="1">Mitochondrion</location>
    </subcellularLocation>
</comment>
<comment type="similarity">
    <text evidence="1">Belongs to the KAE1 / TsaD family.</text>
</comment>
<sequence length="404" mass="43957">MFQSCLPGALRSWSRGVFSTSTRPRLVLGIETSCDETGAAVLDETGRILGESLHSQKETHLKTGGIIPLVAQRLHRENISRVVQEALNRSAIEPSELTAVATTVKPGLALSLGIGLDYSLKFVRQHQKPFIPIHHMEAHALTVRMLHPLDFPFLVLLVSGGHSLLALAKGIDEFLLLGQTLDEAAGDTLDKIARRLSLRNHPECGTLSGGQAIERLAKEGDRLAFHFISPMGQNYDCNFSFAGLRTQITGAINKKEKEEGVEAGQFLSCVKDIAAASQHTVASHLAKRTHRAILFCKSKGLLPEQNPTLIVSGGVASNEYIRQILKIITDATGLHLLCPPSKFCTDNGVMIAWNGIERLKQGKGILSYSEEVSYEPKAPLGLDITSEVKEAAIKVPKLKLRTNS</sequence>
<feature type="transit peptide" description="Mitochondrion" evidence="1">
    <location>
        <begin position="1"/>
        <end position="27"/>
    </location>
</feature>
<feature type="chain" id="PRO_0000307781" description="tRNA N6-adenosine threonylcarbamoyltransferase, mitochondrial">
    <location>
        <begin position="28"/>
        <end position="404"/>
    </location>
</feature>
<feature type="binding site" evidence="1">
    <location>
        <position position="135"/>
    </location>
    <ligand>
        <name>a divalent metal cation</name>
        <dbReference type="ChEBI" id="CHEBI:60240"/>
    </ligand>
</feature>
<feature type="binding site" evidence="1">
    <location>
        <position position="139"/>
    </location>
    <ligand>
        <name>a divalent metal cation</name>
        <dbReference type="ChEBI" id="CHEBI:60240"/>
    </ligand>
</feature>
<feature type="binding site" evidence="1">
    <location>
        <begin position="157"/>
        <end position="161"/>
    </location>
    <ligand>
        <name>substrate</name>
    </ligand>
</feature>
<feature type="binding site" evidence="1">
    <location>
        <position position="190"/>
    </location>
    <ligand>
        <name>substrate</name>
    </ligand>
</feature>
<feature type="binding site" evidence="1">
    <location>
        <position position="210"/>
    </location>
    <ligand>
        <name>substrate</name>
    </ligand>
</feature>
<feature type="binding site" evidence="1">
    <location>
        <position position="214"/>
    </location>
    <ligand>
        <name>substrate</name>
    </ligand>
</feature>
<feature type="binding site" evidence="1">
    <location>
        <begin position="317"/>
        <end position="318"/>
    </location>
    <ligand>
        <name>substrate</name>
    </ligand>
</feature>
<feature type="binding site" evidence="1">
    <location>
        <position position="345"/>
    </location>
    <ligand>
        <name>substrate</name>
    </ligand>
</feature>
<feature type="binding site" evidence="1">
    <location>
        <position position="346"/>
    </location>
    <ligand>
        <name>a divalent metal cation</name>
        <dbReference type="ChEBI" id="CHEBI:60240"/>
    </ligand>
</feature>
<feature type="sequence conflict" description="In Ref. 1; CAD43443." evidence="2" ref="1">
    <original>G</original>
    <variation>R</variation>
    <location>
        <position position="16"/>
    </location>
</feature>
<feature type="sequence conflict" description="In Ref. 2; AAI09474." evidence="2" ref="2">
    <original>L</original>
    <variation>W</variation>
    <location>
        <position position="49"/>
    </location>
</feature>
<feature type="sequence conflict" description="In Ref. 1; CAD43443." evidence="2" ref="1">
    <original>R</original>
    <variation>Q</variation>
    <location>
        <position position="222"/>
    </location>
</feature>
<name>OSGL1_DANRE</name>
<proteinExistence type="evidence at transcript level"/>
<organism>
    <name type="scientific">Danio rerio</name>
    <name type="common">Zebrafish</name>
    <name type="synonym">Brachydanio rerio</name>
    <dbReference type="NCBI Taxonomy" id="7955"/>
    <lineage>
        <taxon>Eukaryota</taxon>
        <taxon>Metazoa</taxon>
        <taxon>Chordata</taxon>
        <taxon>Craniata</taxon>
        <taxon>Vertebrata</taxon>
        <taxon>Euteleostomi</taxon>
        <taxon>Actinopterygii</taxon>
        <taxon>Neopterygii</taxon>
        <taxon>Teleostei</taxon>
        <taxon>Ostariophysi</taxon>
        <taxon>Cypriniformes</taxon>
        <taxon>Danionidae</taxon>
        <taxon>Danioninae</taxon>
        <taxon>Danio</taxon>
    </lineage>
</organism>